<gene>
    <name type="primary">arrL</name>
    <name type="ORF">DDB_G0278057</name>
</gene>
<evidence type="ECO:0000250" key="1"/>
<evidence type="ECO:0000255" key="2"/>
<evidence type="ECO:0000305" key="3"/>
<keyword id="KW-0342">GTP-binding</keyword>
<keyword id="KW-0449">Lipoprotein</keyword>
<keyword id="KW-0519">Myristate</keyword>
<keyword id="KW-0547">Nucleotide-binding</keyword>
<keyword id="KW-0653">Protein transport</keyword>
<keyword id="KW-1185">Reference proteome</keyword>
<keyword id="KW-0813">Transport</keyword>
<feature type="initiator methionine" description="Removed" evidence="2">
    <location>
        <position position="1"/>
    </location>
</feature>
<feature type="chain" id="PRO_0000365729" description="ADP-ribosylation factor L">
    <location>
        <begin position="2"/>
        <end position="195"/>
    </location>
</feature>
<feature type="binding site" evidence="1">
    <location>
        <begin position="25"/>
        <end position="32"/>
    </location>
    <ligand>
        <name>GTP</name>
        <dbReference type="ChEBI" id="CHEBI:37565"/>
    </ligand>
</feature>
<feature type="binding site" evidence="1">
    <location>
        <begin position="72"/>
        <end position="76"/>
    </location>
    <ligand>
        <name>GTP</name>
        <dbReference type="ChEBI" id="CHEBI:37565"/>
    </ligand>
</feature>
<feature type="binding site" evidence="1">
    <location>
        <begin position="131"/>
        <end position="134"/>
    </location>
    <ligand>
        <name>GTP</name>
        <dbReference type="ChEBI" id="CHEBI:37565"/>
    </ligand>
</feature>
<feature type="lipid moiety-binding region" description="N-myristoyl glycine" evidence="2">
    <location>
        <position position="2"/>
    </location>
</feature>
<sequence>MGGIFSKGYLPELPNGSLIKLGIIGLENSGKTTLLNKFIDASSKKSIASVLISTGVYIESIIFKGWEIFAGDLLYPNYISKIYKPYLLGSDVIIFMIDSSDIHQMTEAKNQIDLLIQEQCINSSVFLVMANKQDQKRCVSIHQLEQYLELYRLTNPWKCLPLSLIQEKGIEDLIKWILENTVVRKTYNNQLQTLQ</sequence>
<accession>Q54YV7</accession>
<comment type="function">
    <text evidence="1">May be involved in trafficking events within the endosomal system.</text>
</comment>
<comment type="similarity">
    <text evidence="3">Belongs to the small GTPase superfamily. Arf family.</text>
</comment>
<reference key="1">
    <citation type="journal article" date="2005" name="Nature">
        <title>The genome of the social amoeba Dictyostelium discoideum.</title>
        <authorList>
            <person name="Eichinger L."/>
            <person name="Pachebat J.A."/>
            <person name="Gloeckner G."/>
            <person name="Rajandream M.A."/>
            <person name="Sucgang R."/>
            <person name="Berriman M."/>
            <person name="Song J."/>
            <person name="Olsen R."/>
            <person name="Szafranski K."/>
            <person name="Xu Q."/>
            <person name="Tunggal B."/>
            <person name="Kummerfeld S."/>
            <person name="Madera M."/>
            <person name="Konfortov B.A."/>
            <person name="Rivero F."/>
            <person name="Bankier A.T."/>
            <person name="Lehmann R."/>
            <person name="Hamlin N."/>
            <person name="Davies R."/>
            <person name="Gaudet P."/>
            <person name="Fey P."/>
            <person name="Pilcher K."/>
            <person name="Chen G."/>
            <person name="Saunders D."/>
            <person name="Sodergren E.J."/>
            <person name="Davis P."/>
            <person name="Kerhornou A."/>
            <person name="Nie X."/>
            <person name="Hall N."/>
            <person name="Anjard C."/>
            <person name="Hemphill L."/>
            <person name="Bason N."/>
            <person name="Farbrother P."/>
            <person name="Desany B."/>
            <person name="Just E."/>
            <person name="Morio T."/>
            <person name="Rost R."/>
            <person name="Churcher C.M."/>
            <person name="Cooper J."/>
            <person name="Haydock S."/>
            <person name="van Driessche N."/>
            <person name="Cronin A."/>
            <person name="Goodhead I."/>
            <person name="Muzny D.M."/>
            <person name="Mourier T."/>
            <person name="Pain A."/>
            <person name="Lu M."/>
            <person name="Harper D."/>
            <person name="Lindsay R."/>
            <person name="Hauser H."/>
            <person name="James K.D."/>
            <person name="Quiles M."/>
            <person name="Madan Babu M."/>
            <person name="Saito T."/>
            <person name="Buchrieser C."/>
            <person name="Wardroper A."/>
            <person name="Felder M."/>
            <person name="Thangavelu M."/>
            <person name="Johnson D."/>
            <person name="Knights A."/>
            <person name="Loulseged H."/>
            <person name="Mungall K.L."/>
            <person name="Oliver K."/>
            <person name="Price C."/>
            <person name="Quail M.A."/>
            <person name="Urushihara H."/>
            <person name="Hernandez J."/>
            <person name="Rabbinowitsch E."/>
            <person name="Steffen D."/>
            <person name="Sanders M."/>
            <person name="Ma J."/>
            <person name="Kohara Y."/>
            <person name="Sharp S."/>
            <person name="Simmonds M.N."/>
            <person name="Spiegler S."/>
            <person name="Tivey A."/>
            <person name="Sugano S."/>
            <person name="White B."/>
            <person name="Walker D."/>
            <person name="Woodward J.R."/>
            <person name="Winckler T."/>
            <person name="Tanaka Y."/>
            <person name="Shaulsky G."/>
            <person name="Schleicher M."/>
            <person name="Weinstock G.M."/>
            <person name="Rosenthal A."/>
            <person name="Cox E.C."/>
            <person name="Chisholm R.L."/>
            <person name="Gibbs R.A."/>
            <person name="Loomis W.F."/>
            <person name="Platzer M."/>
            <person name="Kay R.R."/>
            <person name="Williams J.G."/>
            <person name="Dear P.H."/>
            <person name="Noegel A.A."/>
            <person name="Barrell B.G."/>
            <person name="Kuspa A."/>
        </authorList>
    </citation>
    <scope>NUCLEOTIDE SEQUENCE [LARGE SCALE GENOMIC DNA]</scope>
    <source>
        <strain>AX4</strain>
    </source>
</reference>
<dbReference type="EMBL" id="AAFI02000023">
    <property type="protein sequence ID" value="EAL68201.1"/>
    <property type="molecule type" value="Genomic_DNA"/>
</dbReference>
<dbReference type="RefSeq" id="XP_642095.1">
    <property type="nucleotide sequence ID" value="XM_637003.1"/>
</dbReference>
<dbReference type="SMR" id="Q54YV7"/>
<dbReference type="STRING" id="44689.Q54YV7"/>
<dbReference type="PaxDb" id="44689-DDB0230047"/>
<dbReference type="EnsemblProtists" id="EAL68201">
    <property type="protein sequence ID" value="EAL68201"/>
    <property type="gene ID" value="DDB_G0278057"/>
</dbReference>
<dbReference type="GeneID" id="8621306"/>
<dbReference type="KEGG" id="ddi:DDB_G0278057"/>
<dbReference type="dictyBase" id="DDB_G0278057">
    <property type="gene designation" value="arrL"/>
</dbReference>
<dbReference type="VEuPathDB" id="AmoebaDB:DDB_G0278057"/>
<dbReference type="eggNOG" id="KOG0072">
    <property type="taxonomic scope" value="Eukaryota"/>
</dbReference>
<dbReference type="HOGENOM" id="CLU_1405057_0_0_1"/>
<dbReference type="InParanoid" id="Q54YV7"/>
<dbReference type="OMA" id="FIDNTHR"/>
<dbReference type="PhylomeDB" id="Q54YV7"/>
<dbReference type="PRO" id="PR:Q54YV7"/>
<dbReference type="Proteomes" id="UP000002195">
    <property type="component" value="Chromosome 3"/>
</dbReference>
<dbReference type="GO" id="GO:0005737">
    <property type="term" value="C:cytoplasm"/>
    <property type="evidence" value="ECO:0000318"/>
    <property type="project" value="GO_Central"/>
</dbReference>
<dbReference type="GO" id="GO:0005802">
    <property type="term" value="C:trans-Golgi network"/>
    <property type="evidence" value="ECO:0000318"/>
    <property type="project" value="GO_Central"/>
</dbReference>
<dbReference type="GO" id="GO:0005525">
    <property type="term" value="F:GTP binding"/>
    <property type="evidence" value="ECO:0000318"/>
    <property type="project" value="GO_Central"/>
</dbReference>
<dbReference type="GO" id="GO:0003924">
    <property type="term" value="F:GTPase activity"/>
    <property type="evidence" value="ECO:0007669"/>
    <property type="project" value="InterPro"/>
</dbReference>
<dbReference type="GO" id="GO:0006886">
    <property type="term" value="P:intracellular protein transport"/>
    <property type="evidence" value="ECO:0000318"/>
    <property type="project" value="GO_Central"/>
</dbReference>
<dbReference type="GO" id="GO:1903292">
    <property type="term" value="P:protein localization to Golgi membrane"/>
    <property type="evidence" value="ECO:0000318"/>
    <property type="project" value="GO_Central"/>
</dbReference>
<dbReference type="GO" id="GO:0016192">
    <property type="term" value="P:vesicle-mediated transport"/>
    <property type="evidence" value="ECO:0000318"/>
    <property type="project" value="GO_Central"/>
</dbReference>
<dbReference type="FunFam" id="3.40.50.300:FF:004263">
    <property type="entry name" value="ADP-ribosylation factor L"/>
    <property type="match status" value="1"/>
</dbReference>
<dbReference type="Gene3D" id="3.40.50.300">
    <property type="entry name" value="P-loop containing nucleotide triphosphate hydrolases"/>
    <property type="match status" value="1"/>
</dbReference>
<dbReference type="InterPro" id="IPR027417">
    <property type="entry name" value="P-loop_NTPase"/>
</dbReference>
<dbReference type="InterPro" id="IPR024156">
    <property type="entry name" value="Small_GTPase_ARF"/>
</dbReference>
<dbReference type="InterPro" id="IPR006689">
    <property type="entry name" value="Small_GTPase_ARF/SAR"/>
</dbReference>
<dbReference type="PANTHER" id="PTHR45909">
    <property type="entry name" value="ADP-RIBOSYLATION FACTOR-RELATED PROTEIN 1"/>
    <property type="match status" value="1"/>
</dbReference>
<dbReference type="PANTHER" id="PTHR45909:SF1">
    <property type="entry name" value="ADP-RIBOSYLATION FACTOR-RELATED PROTEIN 1"/>
    <property type="match status" value="1"/>
</dbReference>
<dbReference type="Pfam" id="PF00025">
    <property type="entry name" value="Arf"/>
    <property type="match status" value="1"/>
</dbReference>
<dbReference type="SMART" id="SM00177">
    <property type="entry name" value="ARF"/>
    <property type="match status" value="1"/>
</dbReference>
<dbReference type="SUPFAM" id="SSF52540">
    <property type="entry name" value="P-loop containing nucleoside triphosphate hydrolases"/>
    <property type="match status" value="1"/>
</dbReference>
<dbReference type="PROSITE" id="PS51417">
    <property type="entry name" value="ARF"/>
    <property type="match status" value="1"/>
</dbReference>
<organism>
    <name type="scientific">Dictyostelium discoideum</name>
    <name type="common">Social amoeba</name>
    <dbReference type="NCBI Taxonomy" id="44689"/>
    <lineage>
        <taxon>Eukaryota</taxon>
        <taxon>Amoebozoa</taxon>
        <taxon>Evosea</taxon>
        <taxon>Eumycetozoa</taxon>
        <taxon>Dictyostelia</taxon>
        <taxon>Dictyosteliales</taxon>
        <taxon>Dictyosteliaceae</taxon>
        <taxon>Dictyostelium</taxon>
    </lineage>
</organism>
<name>ARFL_DICDI</name>
<protein>
    <recommendedName>
        <fullName>ADP-ribosylation factor L</fullName>
    </recommendedName>
</protein>
<proteinExistence type="inferred from homology"/>